<organism>
    <name type="scientific">Psychrobacter cryohalolentis (strain ATCC BAA-1226 / DSM 17306 / VKM B-2378 / K5)</name>
    <dbReference type="NCBI Taxonomy" id="335284"/>
    <lineage>
        <taxon>Bacteria</taxon>
        <taxon>Pseudomonadati</taxon>
        <taxon>Pseudomonadota</taxon>
        <taxon>Gammaproteobacteria</taxon>
        <taxon>Moraxellales</taxon>
        <taxon>Moraxellaceae</taxon>
        <taxon>Psychrobacter</taxon>
    </lineage>
</organism>
<keyword id="KW-0131">Cell cycle</keyword>
<keyword id="KW-0132">Cell division</keyword>
<keyword id="KW-0997">Cell inner membrane</keyword>
<keyword id="KW-1003">Cell membrane</keyword>
<keyword id="KW-0133">Cell shape</keyword>
<keyword id="KW-0961">Cell wall biogenesis/degradation</keyword>
<keyword id="KW-0460">Magnesium</keyword>
<keyword id="KW-0472">Membrane</keyword>
<keyword id="KW-0479">Metal-binding</keyword>
<keyword id="KW-0573">Peptidoglycan synthesis</keyword>
<keyword id="KW-0808">Transferase</keyword>
<keyword id="KW-0812">Transmembrane</keyword>
<keyword id="KW-1133">Transmembrane helix</keyword>
<sequence length="372" mass="41148">MLVWLFSWLGHYYAPFYAVSSLTLRALLAVVTALAFSMVFGNRVIRRLRALKYGQAIRNDGPQSHLVKTGTPTMGGVLILSAIGVSTLLWARLNNPYVWILLIVMIIFGAVGWADDWLKIKYKNPKGLIARKKYFWLSMGALFVGISLYYIATLQPDIATTREMQDLLIPIFKDWMIPFSAVPFGIGFIIFTYFVINGASNAVNLTDGLDGLAILPVVLVAAGLGAMAYVSGDVRFADYLHVPYIAYNSEVIIVCGAMIGAGLGFLWFNAHPAQVFMGDVGALSLGAMLGTIAVMTRQEIAFAIMGGLFVAEALSVMLQVGSYKLRKKRVFRMAPLHHHFEEIGWKETQVVARFWIIAIILVILGLMTLKLR</sequence>
<gene>
    <name evidence="1" type="primary">mraY</name>
    <name type="ordered locus">Pcryo_2375</name>
</gene>
<protein>
    <recommendedName>
        <fullName evidence="1">Phospho-N-acetylmuramoyl-pentapeptide-transferase</fullName>
        <ecNumber evidence="1">2.7.8.13</ecNumber>
    </recommendedName>
    <alternativeName>
        <fullName evidence="1">UDP-MurNAc-pentapeptide phosphotransferase</fullName>
    </alternativeName>
</protein>
<name>MRAY_PSYCK</name>
<comment type="function">
    <text evidence="1">Catalyzes the initial step of the lipid cycle reactions in the biosynthesis of the cell wall peptidoglycan: transfers peptidoglycan precursor phospho-MurNAc-pentapeptide from UDP-MurNAc-pentapeptide onto the lipid carrier undecaprenyl phosphate, yielding undecaprenyl-pyrophosphoryl-MurNAc-pentapeptide, known as lipid I.</text>
</comment>
<comment type="catalytic activity">
    <reaction evidence="1">
        <text>UDP-N-acetyl-alpha-D-muramoyl-L-alanyl-gamma-D-glutamyl-meso-2,6-diaminopimeloyl-D-alanyl-D-alanine + di-trans,octa-cis-undecaprenyl phosphate = di-trans,octa-cis-undecaprenyl diphospho-N-acetyl-alpha-D-muramoyl-L-alanyl-D-glutamyl-meso-2,6-diaminopimeloyl-D-alanyl-D-alanine + UMP</text>
        <dbReference type="Rhea" id="RHEA:28386"/>
        <dbReference type="ChEBI" id="CHEBI:57865"/>
        <dbReference type="ChEBI" id="CHEBI:60392"/>
        <dbReference type="ChEBI" id="CHEBI:61386"/>
        <dbReference type="ChEBI" id="CHEBI:61387"/>
        <dbReference type="EC" id="2.7.8.13"/>
    </reaction>
</comment>
<comment type="cofactor">
    <cofactor evidence="1">
        <name>Mg(2+)</name>
        <dbReference type="ChEBI" id="CHEBI:18420"/>
    </cofactor>
</comment>
<comment type="pathway">
    <text evidence="1">Cell wall biogenesis; peptidoglycan biosynthesis.</text>
</comment>
<comment type="subcellular location">
    <subcellularLocation>
        <location evidence="1">Cell inner membrane</location>
        <topology evidence="1">Multi-pass membrane protein</topology>
    </subcellularLocation>
</comment>
<comment type="similarity">
    <text evidence="1">Belongs to the glycosyltransferase 4 family. MraY subfamily.</text>
</comment>
<proteinExistence type="inferred from homology"/>
<evidence type="ECO:0000255" key="1">
    <source>
        <dbReference type="HAMAP-Rule" id="MF_00038"/>
    </source>
</evidence>
<accession>Q1Q851</accession>
<feature type="chain" id="PRO_1000003033" description="Phospho-N-acetylmuramoyl-pentapeptide-transferase">
    <location>
        <begin position="1"/>
        <end position="372"/>
    </location>
</feature>
<feature type="transmembrane region" description="Helical" evidence="1">
    <location>
        <begin position="2"/>
        <end position="22"/>
    </location>
</feature>
<feature type="transmembrane region" description="Helical" evidence="1">
    <location>
        <begin position="71"/>
        <end position="91"/>
    </location>
</feature>
<feature type="transmembrane region" description="Helical" evidence="1">
    <location>
        <begin position="98"/>
        <end position="118"/>
    </location>
</feature>
<feature type="transmembrane region" description="Helical" evidence="1">
    <location>
        <begin position="134"/>
        <end position="154"/>
    </location>
</feature>
<feature type="transmembrane region" description="Helical" evidence="1">
    <location>
        <begin position="176"/>
        <end position="196"/>
    </location>
</feature>
<feature type="transmembrane region" description="Helical" evidence="1">
    <location>
        <begin position="211"/>
        <end position="231"/>
    </location>
</feature>
<feature type="transmembrane region" description="Helical" evidence="1">
    <location>
        <begin position="251"/>
        <end position="271"/>
    </location>
</feature>
<feature type="transmembrane region" description="Helical" evidence="1">
    <location>
        <begin position="275"/>
        <end position="295"/>
    </location>
</feature>
<feature type="transmembrane region" description="Helical" evidence="1">
    <location>
        <begin position="300"/>
        <end position="320"/>
    </location>
</feature>
<feature type="transmembrane region" description="Helical" evidence="1">
    <location>
        <begin position="349"/>
        <end position="369"/>
    </location>
</feature>
<reference key="1">
    <citation type="submission" date="2006-03" db="EMBL/GenBank/DDBJ databases">
        <title>Complete sequence of chromosome of Psychrobacter cryohalolentis K5.</title>
        <authorList>
            <consortium name="US DOE Joint Genome Institute"/>
            <person name="Copeland A."/>
            <person name="Lucas S."/>
            <person name="Lapidus A."/>
            <person name="Barry K."/>
            <person name="Detter J.C."/>
            <person name="Glavina T."/>
            <person name="Hammon N."/>
            <person name="Israni S."/>
            <person name="Dalin E."/>
            <person name="Tice H."/>
            <person name="Pitluck S."/>
            <person name="Brettin T."/>
            <person name="Bruce D."/>
            <person name="Han C."/>
            <person name="Tapia R."/>
            <person name="Sims D.R."/>
            <person name="Gilna P."/>
            <person name="Schmutz J."/>
            <person name="Larimer F."/>
            <person name="Land M."/>
            <person name="Hauser L."/>
            <person name="Kyrpides N."/>
            <person name="Kim E."/>
            <person name="Richardson P."/>
        </authorList>
    </citation>
    <scope>NUCLEOTIDE SEQUENCE [LARGE SCALE GENOMIC DNA]</scope>
    <source>
        <strain>ATCC BAA-1226 / DSM 17306 / VKM B-2378 / K5</strain>
    </source>
</reference>
<dbReference type="EC" id="2.7.8.13" evidence="1"/>
<dbReference type="EMBL" id="CP000323">
    <property type="protein sequence ID" value="ABE76152.1"/>
    <property type="molecule type" value="Genomic_DNA"/>
</dbReference>
<dbReference type="RefSeq" id="WP_011514680.1">
    <property type="nucleotide sequence ID" value="NC_007969.1"/>
</dbReference>
<dbReference type="SMR" id="Q1Q851"/>
<dbReference type="STRING" id="335284.Pcryo_2375"/>
<dbReference type="KEGG" id="pcr:Pcryo_2375"/>
<dbReference type="eggNOG" id="COG0472">
    <property type="taxonomic scope" value="Bacteria"/>
</dbReference>
<dbReference type="HOGENOM" id="CLU_023982_0_0_6"/>
<dbReference type="UniPathway" id="UPA00219"/>
<dbReference type="Proteomes" id="UP000002425">
    <property type="component" value="Chromosome"/>
</dbReference>
<dbReference type="GO" id="GO:0005886">
    <property type="term" value="C:plasma membrane"/>
    <property type="evidence" value="ECO:0007669"/>
    <property type="project" value="UniProtKB-SubCell"/>
</dbReference>
<dbReference type="GO" id="GO:0046872">
    <property type="term" value="F:metal ion binding"/>
    <property type="evidence" value="ECO:0007669"/>
    <property type="project" value="UniProtKB-KW"/>
</dbReference>
<dbReference type="GO" id="GO:0008963">
    <property type="term" value="F:phospho-N-acetylmuramoyl-pentapeptide-transferase activity"/>
    <property type="evidence" value="ECO:0007669"/>
    <property type="project" value="UniProtKB-UniRule"/>
</dbReference>
<dbReference type="GO" id="GO:0051992">
    <property type="term" value="F:UDP-N-acetylmuramoyl-L-alanyl-D-glutamyl-meso-2,6-diaminopimelyl-D-alanyl-D-alanine:undecaprenyl-phosphate transferase activity"/>
    <property type="evidence" value="ECO:0007669"/>
    <property type="project" value="RHEA"/>
</dbReference>
<dbReference type="GO" id="GO:0051301">
    <property type="term" value="P:cell division"/>
    <property type="evidence" value="ECO:0007669"/>
    <property type="project" value="UniProtKB-KW"/>
</dbReference>
<dbReference type="GO" id="GO:0071555">
    <property type="term" value="P:cell wall organization"/>
    <property type="evidence" value="ECO:0007669"/>
    <property type="project" value="UniProtKB-KW"/>
</dbReference>
<dbReference type="GO" id="GO:0009252">
    <property type="term" value="P:peptidoglycan biosynthetic process"/>
    <property type="evidence" value="ECO:0007669"/>
    <property type="project" value="UniProtKB-UniRule"/>
</dbReference>
<dbReference type="GO" id="GO:0008360">
    <property type="term" value="P:regulation of cell shape"/>
    <property type="evidence" value="ECO:0007669"/>
    <property type="project" value="UniProtKB-KW"/>
</dbReference>
<dbReference type="CDD" id="cd06852">
    <property type="entry name" value="GT_MraY"/>
    <property type="match status" value="1"/>
</dbReference>
<dbReference type="HAMAP" id="MF_00038">
    <property type="entry name" value="MraY"/>
    <property type="match status" value="1"/>
</dbReference>
<dbReference type="InterPro" id="IPR000715">
    <property type="entry name" value="Glycosyl_transferase_4"/>
</dbReference>
<dbReference type="InterPro" id="IPR003524">
    <property type="entry name" value="PNAcMuramoyl-5peptid_Trfase"/>
</dbReference>
<dbReference type="InterPro" id="IPR018480">
    <property type="entry name" value="PNAcMuramoyl-5peptid_Trfase_CS"/>
</dbReference>
<dbReference type="NCBIfam" id="TIGR00445">
    <property type="entry name" value="mraY"/>
    <property type="match status" value="1"/>
</dbReference>
<dbReference type="PANTHER" id="PTHR22926">
    <property type="entry name" value="PHOSPHO-N-ACETYLMURAMOYL-PENTAPEPTIDE-TRANSFERASE"/>
    <property type="match status" value="1"/>
</dbReference>
<dbReference type="PANTHER" id="PTHR22926:SF5">
    <property type="entry name" value="PHOSPHO-N-ACETYLMURAMOYL-PENTAPEPTIDE-TRANSFERASE HOMOLOG"/>
    <property type="match status" value="1"/>
</dbReference>
<dbReference type="Pfam" id="PF00953">
    <property type="entry name" value="Glycos_transf_4"/>
    <property type="match status" value="1"/>
</dbReference>
<dbReference type="Pfam" id="PF10555">
    <property type="entry name" value="MraY_sig1"/>
    <property type="match status" value="1"/>
</dbReference>
<dbReference type="PROSITE" id="PS01347">
    <property type="entry name" value="MRAY_1"/>
    <property type="match status" value="1"/>
</dbReference>
<dbReference type="PROSITE" id="PS01348">
    <property type="entry name" value="MRAY_2"/>
    <property type="match status" value="1"/>
</dbReference>